<keyword id="KW-1185">Reference proteome</keyword>
<keyword id="KW-0804">Transcription</keyword>
<keyword id="KW-0805">Transcription regulation</keyword>
<name>LEF11_NPVEP</name>
<organism>
    <name type="scientific">Epiphyas postvittana nucleopolyhedrovirus</name>
    <name type="common">EppoMNPV</name>
    <dbReference type="NCBI Taxonomy" id="70600"/>
    <lineage>
        <taxon>Viruses</taxon>
        <taxon>Viruses incertae sedis</taxon>
        <taxon>Naldaviricetes</taxon>
        <taxon>Lefavirales</taxon>
        <taxon>Baculoviridae</taxon>
        <taxon>Alphabaculovirus</taxon>
        <taxon>Alphabaculovirus eppostvittanae</taxon>
    </lineage>
</organism>
<proteinExistence type="inferred from homology"/>
<sequence>MNNCATFSMPHSNATNHTTLSHPVCNNNANCFTRSELYAIWSETINTLKRTFKIKNVHAHMLEDDSGEIKDYIRANLSRFTVITGKCSKRKVCHHDKRIARTLHLEKNLVDEYACSVTHVYSAPKW</sequence>
<evidence type="ECO:0000250" key="1"/>
<evidence type="ECO:0000305" key="2"/>
<reference key="1">
    <citation type="journal article" date="2002" name="J. Gen. Virol.">
        <title>Whole genome analysis of the Epiphyas postvittana nucleopolyhedrovirus.</title>
        <authorList>
            <person name="Hyink O."/>
            <person name="Dellow R.A."/>
            <person name="Olsen M.J."/>
            <person name="Caradoc-Davies K.M.B."/>
            <person name="Drake K."/>
            <person name="Herniou E.A."/>
            <person name="Cory J.S."/>
            <person name="O'Reilly D.R."/>
            <person name="Ward V.K."/>
        </authorList>
    </citation>
    <scope>NUCLEOTIDE SEQUENCE [LARGE SCALE GENOMIC DNA]</scope>
</reference>
<dbReference type="EMBL" id="AY043265">
    <property type="protein sequence ID" value="AAK85585.1"/>
    <property type="molecule type" value="Genomic_DNA"/>
</dbReference>
<dbReference type="RefSeq" id="NP_203190.1">
    <property type="nucleotide sequence ID" value="NC_003083.1"/>
</dbReference>
<dbReference type="GeneID" id="921800"/>
<dbReference type="KEGG" id="vg:921800"/>
<dbReference type="OrthoDB" id="15391at10239"/>
<dbReference type="Proteomes" id="UP000203221">
    <property type="component" value="Genome"/>
</dbReference>
<dbReference type="GO" id="GO:0006355">
    <property type="term" value="P:regulation of DNA-templated transcription"/>
    <property type="evidence" value="ECO:0007669"/>
    <property type="project" value="InterPro"/>
</dbReference>
<dbReference type="GO" id="GO:0019058">
    <property type="term" value="P:viral life cycle"/>
    <property type="evidence" value="ECO:0007669"/>
    <property type="project" value="InterPro"/>
</dbReference>
<dbReference type="InterPro" id="IPR009429">
    <property type="entry name" value="Baculo_LEF-11"/>
</dbReference>
<dbReference type="Pfam" id="PF06385">
    <property type="entry name" value="Baculo_LEF-11"/>
    <property type="match status" value="1"/>
</dbReference>
<comment type="function">
    <text evidence="1">Involved in late/very late gene activation.</text>
</comment>
<comment type="similarity">
    <text evidence="2">Belongs to the baculoviridae LEF-11 family.</text>
</comment>
<organismHost>
    <name type="scientific">Lepidoptera</name>
    <name type="common">butterflies and moths</name>
    <dbReference type="NCBI Taxonomy" id="7088"/>
</organismHost>
<protein>
    <recommendedName>
        <fullName>Late expression factor 11</fullName>
    </recommendedName>
</protein>
<feature type="chain" id="PRO_0000132837" description="Late expression factor 11">
    <location>
        <begin position="1"/>
        <end position="126"/>
    </location>
</feature>
<gene>
    <name type="primary">LEF-11</name>
</gene>
<accession>Q91GM8</accession>